<evidence type="ECO:0000305" key="1"/>
<reference key="1">
    <citation type="journal article" date="2005" name="Nature">
        <title>The genome of the social amoeba Dictyostelium discoideum.</title>
        <authorList>
            <person name="Eichinger L."/>
            <person name="Pachebat J.A."/>
            <person name="Gloeckner G."/>
            <person name="Rajandream M.A."/>
            <person name="Sucgang R."/>
            <person name="Berriman M."/>
            <person name="Song J."/>
            <person name="Olsen R."/>
            <person name="Szafranski K."/>
            <person name="Xu Q."/>
            <person name="Tunggal B."/>
            <person name="Kummerfeld S."/>
            <person name="Madera M."/>
            <person name="Konfortov B.A."/>
            <person name="Rivero F."/>
            <person name="Bankier A.T."/>
            <person name="Lehmann R."/>
            <person name="Hamlin N."/>
            <person name="Davies R."/>
            <person name="Gaudet P."/>
            <person name="Fey P."/>
            <person name="Pilcher K."/>
            <person name="Chen G."/>
            <person name="Saunders D."/>
            <person name="Sodergren E.J."/>
            <person name="Davis P."/>
            <person name="Kerhornou A."/>
            <person name="Nie X."/>
            <person name="Hall N."/>
            <person name="Anjard C."/>
            <person name="Hemphill L."/>
            <person name="Bason N."/>
            <person name="Farbrother P."/>
            <person name="Desany B."/>
            <person name="Just E."/>
            <person name="Morio T."/>
            <person name="Rost R."/>
            <person name="Churcher C.M."/>
            <person name="Cooper J."/>
            <person name="Haydock S."/>
            <person name="van Driessche N."/>
            <person name="Cronin A."/>
            <person name="Goodhead I."/>
            <person name="Muzny D.M."/>
            <person name="Mourier T."/>
            <person name="Pain A."/>
            <person name="Lu M."/>
            <person name="Harper D."/>
            <person name="Lindsay R."/>
            <person name="Hauser H."/>
            <person name="James K.D."/>
            <person name="Quiles M."/>
            <person name="Madan Babu M."/>
            <person name="Saito T."/>
            <person name="Buchrieser C."/>
            <person name="Wardroper A."/>
            <person name="Felder M."/>
            <person name="Thangavelu M."/>
            <person name="Johnson D."/>
            <person name="Knights A."/>
            <person name="Loulseged H."/>
            <person name="Mungall K.L."/>
            <person name="Oliver K."/>
            <person name="Price C."/>
            <person name="Quail M.A."/>
            <person name="Urushihara H."/>
            <person name="Hernandez J."/>
            <person name="Rabbinowitsch E."/>
            <person name="Steffen D."/>
            <person name="Sanders M."/>
            <person name="Ma J."/>
            <person name="Kohara Y."/>
            <person name="Sharp S."/>
            <person name="Simmonds M.N."/>
            <person name="Spiegler S."/>
            <person name="Tivey A."/>
            <person name="Sugano S."/>
            <person name="White B."/>
            <person name="Walker D."/>
            <person name="Woodward J.R."/>
            <person name="Winckler T."/>
            <person name="Tanaka Y."/>
            <person name="Shaulsky G."/>
            <person name="Schleicher M."/>
            <person name="Weinstock G.M."/>
            <person name="Rosenthal A."/>
            <person name="Cox E.C."/>
            <person name="Chisholm R.L."/>
            <person name="Gibbs R.A."/>
            <person name="Loomis W.F."/>
            <person name="Platzer M."/>
            <person name="Kay R.R."/>
            <person name="Williams J.G."/>
            <person name="Dear P.H."/>
            <person name="Noegel A.A."/>
            <person name="Barrell B.G."/>
            <person name="Kuspa A."/>
        </authorList>
    </citation>
    <scope>NUCLEOTIDE SEQUENCE [LARGE SCALE GENOMIC DNA]</scope>
    <source>
        <strain>AX4</strain>
    </source>
</reference>
<dbReference type="EMBL" id="AAFI02000003">
    <property type="protein sequence ID" value="EAL73638.1"/>
    <property type="molecule type" value="Genomic_DNA"/>
</dbReference>
<dbReference type="RefSeq" id="XP_647369.1">
    <property type="nucleotide sequence ID" value="XM_642277.1"/>
</dbReference>
<dbReference type="PaxDb" id="44689-DDB0202167"/>
<dbReference type="EnsemblProtists" id="EAL73638">
    <property type="protein sequence ID" value="EAL73638"/>
    <property type="gene ID" value="DDB_G0268370"/>
</dbReference>
<dbReference type="GeneID" id="8616179"/>
<dbReference type="KEGG" id="ddi:DDB_G0268370"/>
<dbReference type="dictyBase" id="DDB_G0268370"/>
<dbReference type="HOGENOM" id="CLU_3192438_0_0_1"/>
<dbReference type="InParanoid" id="Q55G14"/>
<dbReference type="Proteomes" id="UP000002195">
    <property type="component" value="Chromosome 1"/>
</dbReference>
<proteinExistence type="uncertain"/>
<comment type="caution">
    <text evidence="1">Product of a dubious gene prediction.</text>
</comment>
<name>Y2167_DICDI</name>
<gene>
    <name type="ORF">DDB_G0268370</name>
</gene>
<keyword id="KW-1185">Reference proteome</keyword>
<organism>
    <name type="scientific">Dictyostelium discoideum</name>
    <name type="common">Social amoeba</name>
    <dbReference type="NCBI Taxonomy" id="44689"/>
    <lineage>
        <taxon>Eukaryota</taxon>
        <taxon>Amoebozoa</taxon>
        <taxon>Evosea</taxon>
        <taxon>Eumycetozoa</taxon>
        <taxon>Dictyostelia</taxon>
        <taxon>Dictyosteliales</taxon>
        <taxon>Dictyosteliaceae</taxon>
        <taxon>Dictyostelium</taxon>
    </lineage>
</organism>
<protein>
    <recommendedName>
        <fullName>Putative uncharacterized protein DDB_G0268370</fullName>
    </recommendedName>
</protein>
<feature type="chain" id="PRO_0000348093" description="Putative uncharacterized protein DDB_G0268370">
    <location>
        <begin position="1"/>
        <end position="46"/>
    </location>
</feature>
<sequence>MSAPCGDIINKTNNKIINNDDSYDENEYSNPLLKYTNLLTVIPLNY</sequence>
<accession>Q55G14</accession>